<accession>O88819</accession>
<accession>Q3TQ63</accession>
<keyword id="KW-1015">Disulfide bond</keyword>
<keyword id="KW-0325">Glycoprotein</keyword>
<keyword id="KW-0328">Glycosyltransferase</keyword>
<keyword id="KW-0333">Golgi apparatus</keyword>
<keyword id="KW-0443">Lipid metabolism</keyword>
<keyword id="KW-0472">Membrane</keyword>
<keyword id="KW-1185">Reference proteome</keyword>
<keyword id="KW-0735">Signal-anchor</keyword>
<keyword id="KW-0808">Transferase</keyword>
<keyword id="KW-0812">Transmembrane</keyword>
<keyword id="KW-1133">Transmembrane helix</keyword>
<dbReference type="EC" id="2.4.1.152" evidence="4"/>
<dbReference type="EMBL" id="AB015426">
    <property type="protein sequence ID" value="BAA33522.1"/>
    <property type="molecule type" value="mRNA"/>
</dbReference>
<dbReference type="EMBL" id="AK032177">
    <property type="protein sequence ID" value="BAC27746.1"/>
    <property type="molecule type" value="mRNA"/>
</dbReference>
<dbReference type="EMBL" id="AK036183">
    <property type="protein sequence ID" value="BAC29338.1"/>
    <property type="molecule type" value="mRNA"/>
</dbReference>
<dbReference type="EMBL" id="AK043410">
    <property type="protein sequence ID" value="BAC31540.1"/>
    <property type="molecule type" value="mRNA"/>
</dbReference>
<dbReference type="EMBL" id="AK047650">
    <property type="protein sequence ID" value="BAC33112.1"/>
    <property type="molecule type" value="mRNA"/>
</dbReference>
<dbReference type="EMBL" id="AK049122">
    <property type="protein sequence ID" value="BAC33555.1"/>
    <property type="molecule type" value="mRNA"/>
</dbReference>
<dbReference type="EMBL" id="AK163871">
    <property type="protein sequence ID" value="BAE37522.1"/>
    <property type="molecule type" value="mRNA"/>
</dbReference>
<dbReference type="CCDS" id="CCDS18011.1"/>
<dbReference type="RefSeq" id="NP_034373.1">
    <property type="nucleotide sequence ID" value="NM_010243.3"/>
</dbReference>
<dbReference type="SMR" id="O88819"/>
<dbReference type="FunCoup" id="O88819">
    <property type="interactions" value="634"/>
</dbReference>
<dbReference type="STRING" id="10090.ENSMUSP00000081826"/>
<dbReference type="SwissLipids" id="SLP:000001437"/>
<dbReference type="CAZy" id="GT10">
    <property type="family name" value="Glycosyltransferase Family 10"/>
</dbReference>
<dbReference type="GlyConnect" id="2119">
    <property type="glycosylation" value="1 N-Linked glycan (1 site)"/>
</dbReference>
<dbReference type="GlyCosmos" id="O88819">
    <property type="glycosylation" value="3 sites, 1 glycan"/>
</dbReference>
<dbReference type="GlyGen" id="O88819">
    <property type="glycosylation" value="3 sites, 2 N-linked glycans (1 site)"/>
</dbReference>
<dbReference type="iPTMnet" id="O88819"/>
<dbReference type="PhosphoSitePlus" id="O88819"/>
<dbReference type="jPOST" id="O88819"/>
<dbReference type="PaxDb" id="10090-ENSMUSP00000081826"/>
<dbReference type="ProteomicsDB" id="271615"/>
<dbReference type="Antibodypedia" id="55123">
    <property type="antibodies" value="25 antibodies from 14 providers"/>
</dbReference>
<dbReference type="DNASU" id="14348"/>
<dbReference type="Ensembl" id="ENSMUST00000084770.5">
    <property type="protein sequence ID" value="ENSMUSP00000081826.5"/>
    <property type="gene ID" value="ENSMUSG00000055373.9"/>
</dbReference>
<dbReference type="Ensembl" id="ENSMUST00000108199.2">
    <property type="protein sequence ID" value="ENSMUSP00000103834.2"/>
    <property type="gene ID" value="ENSMUSG00000055373.9"/>
</dbReference>
<dbReference type="GeneID" id="14348"/>
<dbReference type="KEGG" id="mmu:14348"/>
<dbReference type="UCSC" id="uc008sei.1">
    <property type="organism name" value="mouse"/>
</dbReference>
<dbReference type="AGR" id="MGI:1330859"/>
<dbReference type="CTD" id="10690"/>
<dbReference type="MGI" id="MGI:1330859">
    <property type="gene designation" value="Fut9"/>
</dbReference>
<dbReference type="VEuPathDB" id="HostDB:ENSMUSG00000055373"/>
<dbReference type="eggNOG" id="KOG2619">
    <property type="taxonomic scope" value="Eukaryota"/>
</dbReference>
<dbReference type="GeneTree" id="ENSGT00940000155095"/>
<dbReference type="HOGENOM" id="CLU_032075_4_2_1"/>
<dbReference type="InParanoid" id="O88819"/>
<dbReference type="OMA" id="FRKWDSQ"/>
<dbReference type="OrthoDB" id="427096at2759"/>
<dbReference type="PhylomeDB" id="O88819"/>
<dbReference type="TreeFam" id="TF316348"/>
<dbReference type="Reactome" id="R-MMU-9037629">
    <property type="pathway name" value="Lewis blood group biosynthesis"/>
</dbReference>
<dbReference type="UniPathway" id="UPA00378"/>
<dbReference type="BioGRID-ORCS" id="14348">
    <property type="hits" value="3 hits in 80 CRISPR screens"/>
</dbReference>
<dbReference type="ChiTaRS" id="Fut9">
    <property type="organism name" value="mouse"/>
</dbReference>
<dbReference type="PRO" id="PR:O88819"/>
<dbReference type="Proteomes" id="UP000000589">
    <property type="component" value="Chromosome 4"/>
</dbReference>
<dbReference type="RNAct" id="O88819">
    <property type="molecule type" value="protein"/>
</dbReference>
<dbReference type="Bgee" id="ENSMUSG00000055373">
    <property type="expression patterns" value="Expressed in retrosplenial region and 122 other cell types or tissues"/>
</dbReference>
<dbReference type="ExpressionAtlas" id="O88819">
    <property type="expression patterns" value="baseline and differential"/>
</dbReference>
<dbReference type="GO" id="GO:0005794">
    <property type="term" value="C:Golgi apparatus"/>
    <property type="evidence" value="ECO:0000314"/>
    <property type="project" value="UniProtKB"/>
</dbReference>
<dbReference type="GO" id="GO:0000139">
    <property type="term" value="C:Golgi membrane"/>
    <property type="evidence" value="ECO:0007669"/>
    <property type="project" value="UniProtKB-SubCell"/>
</dbReference>
<dbReference type="GO" id="GO:0005802">
    <property type="term" value="C:trans-Golgi network"/>
    <property type="evidence" value="ECO:0000250"/>
    <property type="project" value="UniProtKB"/>
</dbReference>
<dbReference type="GO" id="GO:0032588">
    <property type="term" value="C:trans-Golgi network membrane"/>
    <property type="evidence" value="ECO:0000250"/>
    <property type="project" value="UniProtKB"/>
</dbReference>
<dbReference type="GO" id="GO:0017083">
    <property type="term" value="F:4-galactosyl-N-acetylglucosaminide 3-alpha-L-fucosyltransferase activity"/>
    <property type="evidence" value="ECO:0000314"/>
    <property type="project" value="UniProtKB"/>
</dbReference>
<dbReference type="GO" id="GO:0046920">
    <property type="term" value="F:alpha-(1-&gt;3)-fucosyltransferase activity"/>
    <property type="evidence" value="ECO:0000314"/>
    <property type="project" value="MGI"/>
</dbReference>
<dbReference type="GO" id="GO:0042803">
    <property type="term" value="F:protein homodimerization activity"/>
    <property type="evidence" value="ECO:0000250"/>
    <property type="project" value="UniProtKB"/>
</dbReference>
<dbReference type="GO" id="GO:0036065">
    <property type="term" value="P:fucosylation"/>
    <property type="evidence" value="ECO:0000314"/>
    <property type="project" value="UniProtKB"/>
</dbReference>
<dbReference type="GO" id="GO:0006688">
    <property type="term" value="P:glycosphingolipid biosynthetic process"/>
    <property type="evidence" value="ECO:0000250"/>
    <property type="project" value="UniProtKB"/>
</dbReference>
<dbReference type="GO" id="GO:0106402">
    <property type="term" value="P:Lewis x epitope biosynthetic process"/>
    <property type="evidence" value="ECO:0000315"/>
    <property type="project" value="UniProtKB"/>
</dbReference>
<dbReference type="GO" id="GO:0036071">
    <property type="term" value="P:N-glycan fucosylation"/>
    <property type="evidence" value="ECO:0000314"/>
    <property type="project" value="MGI"/>
</dbReference>
<dbReference type="GO" id="GO:0030182">
    <property type="term" value="P:neuron differentiation"/>
    <property type="evidence" value="ECO:0000250"/>
    <property type="project" value="UniProtKB"/>
</dbReference>
<dbReference type="GO" id="GO:0036445">
    <property type="term" value="P:neuronal stem cell division"/>
    <property type="evidence" value="ECO:0000315"/>
    <property type="project" value="UniProtKB"/>
</dbReference>
<dbReference type="GO" id="GO:0009312">
    <property type="term" value="P:oligosaccharide biosynthetic process"/>
    <property type="evidence" value="ECO:0000315"/>
    <property type="project" value="MGI"/>
</dbReference>
<dbReference type="GO" id="GO:0000271">
    <property type="term" value="P:polysaccharide biosynthetic process"/>
    <property type="evidence" value="ECO:0000315"/>
    <property type="project" value="UniProtKB"/>
</dbReference>
<dbReference type="GO" id="GO:0010976">
    <property type="term" value="P:positive regulation of neuron projection development"/>
    <property type="evidence" value="ECO:0000250"/>
    <property type="project" value="UniProtKB"/>
</dbReference>
<dbReference type="GO" id="GO:0006486">
    <property type="term" value="P:protein glycosylation"/>
    <property type="evidence" value="ECO:0000314"/>
    <property type="project" value="MGI"/>
</dbReference>
<dbReference type="GO" id="GO:0006487">
    <property type="term" value="P:protein N-linked glycosylation"/>
    <property type="evidence" value="ECO:0000250"/>
    <property type="project" value="UniProtKB"/>
</dbReference>
<dbReference type="GO" id="GO:0006493">
    <property type="term" value="P:protein O-linked glycosylation"/>
    <property type="evidence" value="ECO:0000250"/>
    <property type="project" value="UniProtKB"/>
</dbReference>
<dbReference type="GO" id="GO:1903037">
    <property type="term" value="P:regulation of leukocyte cell-cell adhesion"/>
    <property type="evidence" value="ECO:0000250"/>
    <property type="project" value="UniProtKB"/>
</dbReference>
<dbReference type="GO" id="GO:1903236">
    <property type="term" value="P:regulation of leukocyte tethering or rolling"/>
    <property type="evidence" value="ECO:0000250"/>
    <property type="project" value="UniProtKB"/>
</dbReference>
<dbReference type="FunFam" id="3.40.50.11660:FF:000001">
    <property type="entry name" value="alpha-(1,3)-fucosyltransferase 9"/>
    <property type="match status" value="1"/>
</dbReference>
<dbReference type="Gene3D" id="3.40.50.11660">
    <property type="entry name" value="Glycosyl transferase family 10, C-terminal domain"/>
    <property type="match status" value="1"/>
</dbReference>
<dbReference type="InterPro" id="IPR055270">
    <property type="entry name" value="Glyco_tran_10_C"/>
</dbReference>
<dbReference type="InterPro" id="IPR031481">
    <property type="entry name" value="Glyco_tran_10_N"/>
</dbReference>
<dbReference type="InterPro" id="IPR001503">
    <property type="entry name" value="Glyco_trans_10"/>
</dbReference>
<dbReference type="InterPro" id="IPR038577">
    <property type="entry name" value="GT10-like_C_sf"/>
</dbReference>
<dbReference type="PANTHER" id="PTHR11929:SF10">
    <property type="entry name" value="4-GALACTOSYL-N-ACETYLGLUCOSAMINIDE 3-ALPHA-L-FUCOSYLTRANSFERASE 9"/>
    <property type="match status" value="1"/>
</dbReference>
<dbReference type="PANTHER" id="PTHR11929">
    <property type="entry name" value="ALPHA- 1,3 -FUCOSYLTRANSFERASE"/>
    <property type="match status" value="1"/>
</dbReference>
<dbReference type="Pfam" id="PF17039">
    <property type="entry name" value="Glyco_tran_10_N"/>
    <property type="match status" value="1"/>
</dbReference>
<dbReference type="Pfam" id="PF00852">
    <property type="entry name" value="Glyco_transf_10"/>
    <property type="match status" value="1"/>
</dbReference>
<dbReference type="SUPFAM" id="SSF53756">
    <property type="entry name" value="UDP-Glycosyltransferase/glycogen phosphorylase"/>
    <property type="match status" value="1"/>
</dbReference>
<evidence type="ECO:0000250" key="1">
    <source>
        <dbReference type="UniProtKB" id="Q6P4F1"/>
    </source>
</evidence>
<evidence type="ECO:0000250" key="2">
    <source>
        <dbReference type="UniProtKB" id="Q9Y231"/>
    </source>
</evidence>
<evidence type="ECO:0000255" key="3"/>
<evidence type="ECO:0000269" key="4">
    <source>
    </source>
</evidence>
<evidence type="ECO:0000269" key="5">
    <source>
    </source>
</evidence>
<evidence type="ECO:0000269" key="6">
    <source>
    </source>
</evidence>
<evidence type="ECO:0000269" key="7">
    <source>
    </source>
</evidence>
<evidence type="ECO:0000269" key="8">
    <source>
    </source>
</evidence>
<evidence type="ECO:0000303" key="9">
    <source>
    </source>
</evidence>
<evidence type="ECO:0000303" key="10">
    <source>
    </source>
</evidence>
<evidence type="ECO:0000305" key="11"/>
<evidence type="ECO:0000312" key="12">
    <source>
        <dbReference type="MGI" id="MGI:1330859"/>
    </source>
</evidence>
<feature type="chain" id="PRO_0000221119" description="4-galactosyl-N-acetylglucosaminide 3-alpha-L-fucosyltransferase 9">
    <location>
        <begin position="1"/>
        <end position="359"/>
    </location>
</feature>
<feature type="topological domain" description="Cytoplasmic" evidence="3">
    <location>
        <begin position="1"/>
        <end position="11"/>
    </location>
</feature>
<feature type="transmembrane region" description="Helical; Signal-anchor for type II membrane protein" evidence="3">
    <location>
        <begin position="12"/>
        <end position="32"/>
    </location>
</feature>
<feature type="topological domain" description="Lumenal" evidence="3">
    <location>
        <begin position="33"/>
        <end position="359"/>
    </location>
</feature>
<feature type="region of interest" description="Acceptor-binding" evidence="2">
    <location>
        <begin position="63"/>
        <end position="168"/>
    </location>
</feature>
<feature type="region of interest" description="Donor-binding" evidence="2">
    <location>
        <begin position="169"/>
        <end position="326"/>
    </location>
</feature>
<feature type="region of interest" description="Acceptor-binding" evidence="2">
    <location>
        <begin position="327"/>
        <end position="359"/>
    </location>
</feature>
<feature type="active site" description="Nucleophile" evidence="2">
    <location>
        <position position="137"/>
    </location>
</feature>
<feature type="binding site" evidence="2">
    <location>
        <position position="75"/>
    </location>
    <ligand>
        <name>a beta-D-galactosyl-(1-&gt;4)-N-acetyl-beta-D-glucosaminyl derivative</name>
        <dbReference type="ChEBI" id="CHEBI:133507"/>
    </ligand>
</feature>
<feature type="binding site" evidence="2">
    <location>
        <position position="137"/>
    </location>
    <ligand>
        <name>a beta-D-galactosyl-(1-&gt;4)-N-acetyl-beta-D-glucosaminyl derivative</name>
        <dbReference type="ChEBI" id="CHEBI:133507"/>
    </ligand>
</feature>
<feature type="binding site" evidence="2">
    <location>
        <position position="137"/>
    </location>
    <ligand>
        <name>GDP-beta-L-fucose</name>
        <dbReference type="ChEBI" id="CHEBI:57273"/>
    </ligand>
</feature>
<feature type="binding site" evidence="2">
    <location>
        <position position="168"/>
    </location>
    <ligand>
        <name>GDP-beta-L-fucose</name>
        <dbReference type="ChEBI" id="CHEBI:57273"/>
    </ligand>
</feature>
<feature type="binding site" evidence="2">
    <location>
        <position position="192"/>
    </location>
    <ligand>
        <name>GDP-beta-L-fucose</name>
        <dbReference type="ChEBI" id="CHEBI:57273"/>
    </ligand>
</feature>
<feature type="binding site" evidence="2">
    <location>
        <position position="194"/>
    </location>
    <ligand>
        <name>GDP-beta-L-fucose</name>
        <dbReference type="ChEBI" id="CHEBI:57273"/>
    </ligand>
</feature>
<feature type="binding site" evidence="2">
    <location>
        <position position="195"/>
    </location>
    <ligand>
        <name>GDP-beta-L-fucose</name>
        <dbReference type="ChEBI" id="CHEBI:57273"/>
    </ligand>
</feature>
<feature type="binding site" evidence="2">
    <location>
        <position position="202"/>
    </location>
    <ligand>
        <name>GDP-beta-L-fucose</name>
        <dbReference type="ChEBI" id="CHEBI:57273"/>
    </ligand>
</feature>
<feature type="binding site" evidence="2">
    <location>
        <position position="226"/>
    </location>
    <ligand>
        <name>GDP-beta-L-fucose</name>
        <dbReference type="ChEBI" id="CHEBI:57273"/>
    </ligand>
</feature>
<feature type="binding site" evidence="2">
    <location>
        <position position="241"/>
    </location>
    <ligand>
        <name>GDP-beta-L-fucose</name>
        <dbReference type="ChEBI" id="CHEBI:57273"/>
    </ligand>
</feature>
<feature type="binding site" evidence="2">
    <location>
        <position position="246"/>
    </location>
    <ligand>
        <name>GDP-beta-L-fucose</name>
        <dbReference type="ChEBI" id="CHEBI:57273"/>
    </ligand>
</feature>
<feature type="binding site" evidence="2">
    <location>
        <position position="252"/>
    </location>
    <ligand>
        <name>GDP-beta-L-fucose</name>
        <dbReference type="ChEBI" id="CHEBI:57273"/>
    </ligand>
</feature>
<feature type="binding site" evidence="2">
    <location>
        <position position="255"/>
    </location>
    <ligand>
        <name>GDP-beta-L-fucose</name>
        <dbReference type="ChEBI" id="CHEBI:57273"/>
    </ligand>
</feature>
<feature type="binding site" evidence="2">
    <location>
        <position position="256"/>
    </location>
    <ligand>
        <name>GDP-beta-L-fucose</name>
        <dbReference type="ChEBI" id="CHEBI:57273"/>
    </ligand>
</feature>
<feature type="glycosylation site" description="N-linked (GlcNAc...) asparagine" evidence="3">
    <location>
        <position position="62"/>
    </location>
</feature>
<feature type="glycosylation site" description="N-linked (GlcNAc...) asparagine" evidence="3">
    <location>
        <position position="101"/>
    </location>
</feature>
<feature type="glycosylation site" description="N-linked (GlcNAc...) asparagine" evidence="2 3">
    <location>
        <position position="153"/>
    </location>
</feature>
<feature type="disulfide bond" evidence="2">
    <location>
        <begin position="82"/>
        <end position="335"/>
    </location>
</feature>
<feature type="disulfide bond" evidence="2">
    <location>
        <begin position="91"/>
        <end position="338"/>
    </location>
</feature>
<feature type="disulfide bond" evidence="2">
    <location>
        <begin position="190"/>
        <end position="238"/>
    </location>
</feature>
<protein>
    <recommendedName>
        <fullName evidence="11">4-galactosyl-N-acetylglucosaminide 3-alpha-L-fucosyltransferase 9</fullName>
        <ecNumber evidence="4">2.4.1.152</ecNumber>
    </recommendedName>
    <alternativeName>
        <fullName>Fucosyltransferase 9</fullName>
    </alternativeName>
    <alternativeName>
        <fullName evidence="9">Fucosyltransferase IX</fullName>
        <shortName evidence="10">Fuc-TIX</shortName>
        <shortName>FucT-IX</shortName>
    </alternativeName>
    <alternativeName>
        <fullName>Galactoside 3-L-fucosyltransferase</fullName>
    </alternativeName>
</protein>
<gene>
    <name evidence="12" type="primary">Fut9</name>
</gene>
<name>FUT9_MOUSE</name>
<comment type="function">
    <text evidence="2 4 5 6 7 8">Catalyzes alpha(1-&gt;3) linkage of fucosyl moiety transferred from GDP-beta-L-fucose to N-acetyl glucosamine (GlcNAc) within type 2 lactosamine (LacNAc, beta-D-Gal-(1-&gt;4)-beta-D-GlcNAc-) glycan attached to glycolipids and N- or O-linked glycoproteins. Fucosylates distal type 2 LacNAc and its fucosylated (H-type 2 LacNAc) and sialylated (sialyl-type 2 LacNAc) derivatives to form Lewis x (Lex) (CD15) and Lewis y (Ley) antigenic epitopes involved in cell adhesion and differentiation (By similarity) (PubMed:12626397, PubMed:15121843, PubMed:16973732, PubMed:22645129, PubMed:9756916). Generates Lex epitopes in the brain, presumably playing a role in the maintenance of neuronal stemness and neurite outgrowth in progenitor neural cells (By similarity) (PubMed:16973732, PubMed:22645129). Fucosylates the internal type 2 LacNAc unit of the polylactosamine chain to form VIM-2 antigen that serves as recognition epitope for SELE (By similarity). Can also modify milk oligosaccharides in particular type 2 tetrasaccharide LNnT (By similarity) (PubMed:9756916).</text>
</comment>
<comment type="catalytic activity">
    <reaction evidence="4">
        <text>a beta-D-galactosyl-(1-&gt;4)-N-acetyl-beta-D-glucosaminyl derivative + GDP-beta-L-fucose = a beta-D-galactosyl-(1-&gt;4)-[alpha-L-fucosyl-(1-&gt;3)]-N-acetyl-beta-D-glucosaminyl derivative + GDP + H(+)</text>
        <dbReference type="Rhea" id="RHEA:14257"/>
        <dbReference type="ChEBI" id="CHEBI:15378"/>
        <dbReference type="ChEBI" id="CHEBI:57273"/>
        <dbReference type="ChEBI" id="CHEBI:58189"/>
        <dbReference type="ChEBI" id="CHEBI:133507"/>
        <dbReference type="ChEBI" id="CHEBI:137941"/>
        <dbReference type="EC" id="2.4.1.152"/>
    </reaction>
    <physiologicalReaction direction="left-to-right" evidence="4 5 6 7 8">
        <dbReference type="Rhea" id="RHEA:14258"/>
    </physiologicalReaction>
</comment>
<comment type="catalytic activity">
    <reaction evidence="2">
        <text>an alpha-Neu5Ac-(2-&gt;3)-beta-D-Gal-(1-&gt;4)-beta-D-GlcNAc-(1-&gt;3)-beta-D-Gal-(1-&gt;4)-beta-D-GlcNAc derivative + GDP-beta-L-fucose = an alpha-Neu5Ac-(2-&gt;3)-beta-D-Gal-(1-&gt;4)-beta-D-GlcNAc-(1-&gt;3)-beta-D-Gal-(1-&gt;4)-[alpha-L-Fuc-(1-&gt;3)]-beta-D-GlcNAc derivative + GDP + H(+)</text>
        <dbReference type="Rhea" id="RHEA:68044"/>
        <dbReference type="ChEBI" id="CHEBI:15378"/>
        <dbReference type="ChEBI" id="CHEBI:57273"/>
        <dbReference type="ChEBI" id="CHEBI:58189"/>
        <dbReference type="ChEBI" id="CHEBI:145343"/>
        <dbReference type="ChEBI" id="CHEBI:176900"/>
    </reaction>
    <physiologicalReaction direction="left-to-right" evidence="2">
        <dbReference type="Rhea" id="RHEA:68045"/>
    </physiologicalReaction>
</comment>
<comment type="catalytic activity">
    <reaction evidence="4">
        <text>alpha-N-glycoloylneuraminosyl-(2-&gt;3)-beta-D-galactosyl-(1-&gt;4)-N-acetyl-beta-D-glucosaminyl-(1-&gt;3)-beta-D-galactosyl-(1-&gt;4)-N-acetyl-beta-D-glucosaminyl-(1-&gt;3)-beta-D-galactosyl-(1-&gt;4)-beta-D-glucosyl-(1&lt;-&gt;1')-ceramide + GDP-beta-L-fucose = alpha-N-glycoloylneuraminosyl-(2-&gt;3)-beta-D-galactosyl-(1-&gt;4)-N-acetyl-beta-D-glucosaminyl-(1-&gt;3)-beta-D-galactosyl-(1-&gt;4)-[alpha-L-fucosyl-(1-&gt;3)]-N-acetyl-beta-D-glucosaminyl-(1-&gt;3)-beta-D-galactosyl-(1-&gt;4)-beta-D-glucosyl-(1&lt;-&gt;1')-ceramide + GDP + H(+)</text>
        <dbReference type="Rhea" id="RHEA:48388"/>
        <dbReference type="ChEBI" id="CHEBI:15378"/>
        <dbReference type="ChEBI" id="CHEBI:57273"/>
        <dbReference type="ChEBI" id="CHEBI:58189"/>
        <dbReference type="ChEBI" id="CHEBI:90383"/>
        <dbReference type="ChEBI" id="CHEBI:90384"/>
    </reaction>
    <physiologicalReaction direction="left-to-right" evidence="4">
        <dbReference type="Rhea" id="RHEA:48389"/>
    </physiologicalReaction>
</comment>
<comment type="catalytic activity">
    <reaction evidence="4">
        <text>alpha-D-galactosyl-(1-&gt;3)-beta-D-galactosyl-(1-&gt;4)-N-acetyl-beta-D-glucosaminyl-(1-&gt;3)-beta-D-galactosyl-(1-&gt;4)-beta-D-glucosyl-(1&lt;-&gt;1')-ceramide + GDP-beta-L-fucose = a neolactoside IV(3)-alpha-Gal,III(3)-alpha-Fuc-nLc4Cer + GDP + H(+)</text>
        <dbReference type="Rhea" id="RHEA:48380"/>
        <dbReference type="ChEBI" id="CHEBI:15378"/>
        <dbReference type="ChEBI" id="CHEBI:57273"/>
        <dbReference type="ChEBI" id="CHEBI:58189"/>
        <dbReference type="ChEBI" id="CHEBI:90380"/>
        <dbReference type="ChEBI" id="CHEBI:90381"/>
    </reaction>
    <physiologicalReaction direction="left-to-right" evidence="4 6">
        <dbReference type="Rhea" id="RHEA:48381"/>
    </physiologicalReaction>
</comment>
<comment type="catalytic activity">
    <reaction evidence="4">
        <text>a neolactoside nLc4Cer + GDP-beta-L-fucose = a neolactoside III(3)-alpha-Fuc-nLc4Cer + GDP + H(+)</text>
        <dbReference type="Rhea" id="RHEA:48376"/>
        <dbReference type="ChEBI" id="CHEBI:15378"/>
        <dbReference type="ChEBI" id="CHEBI:57273"/>
        <dbReference type="ChEBI" id="CHEBI:58189"/>
        <dbReference type="ChEBI" id="CHEBI:90376"/>
        <dbReference type="ChEBI" id="CHEBI:90379"/>
    </reaction>
    <physiologicalReaction direction="left-to-right" evidence="4 6">
        <dbReference type="Rhea" id="RHEA:48377"/>
    </physiologicalReaction>
</comment>
<comment type="catalytic activity">
    <reaction evidence="2">
        <text>an N-acetyl-alpha-neuraminyl-(2-&gt;3)-beta-D-galactosyl-(1-&gt;4)-N-acetyl-beta-D-glucosaminyl derivative + GDP-beta-L-fucose = an alpha-Neu5Ac-(2-&gt;3)-beta-D-Gal-(1-&gt;4)-[alpha-L-Fuc-(1-&gt;3)]-beta-D-GlcNAc derivative + GDP + H(+)</text>
        <dbReference type="Rhea" id="RHEA:56076"/>
        <dbReference type="ChEBI" id="CHEBI:15378"/>
        <dbReference type="ChEBI" id="CHEBI:57273"/>
        <dbReference type="ChEBI" id="CHEBI:58189"/>
        <dbReference type="ChEBI" id="CHEBI:136545"/>
        <dbReference type="ChEBI" id="CHEBI:139509"/>
    </reaction>
    <physiologicalReaction direction="left-to-right" evidence="2">
        <dbReference type="Rhea" id="RHEA:56077"/>
    </physiologicalReaction>
</comment>
<comment type="catalytic activity">
    <reaction evidence="2">
        <text>beta-D-Gal-(1-&gt;4)-beta-D-GlcNAc-(1-&gt;3)-beta-D-Gal-(1-&gt;4)-D-Glc + GDP-beta-L-fucose = beta-D-Gal-(1-&gt;4)-[alpha-L-Fuc-(1-&gt;3)]-beta-D-GlcNAc-(1-&gt;3)-beta-D-Gal-(1-&gt;4)-D-Glc + GDP + H(+)</text>
        <dbReference type="Rhea" id="RHEA:77187"/>
        <dbReference type="ChEBI" id="CHEBI:15378"/>
        <dbReference type="ChEBI" id="CHEBI:57273"/>
        <dbReference type="ChEBI" id="CHEBI:58189"/>
        <dbReference type="ChEBI" id="CHEBI:60239"/>
        <dbReference type="ChEBI" id="CHEBI:61352"/>
    </reaction>
    <physiologicalReaction direction="left-to-right" evidence="2">
        <dbReference type="Rhea" id="RHEA:77188"/>
    </physiologicalReaction>
</comment>
<comment type="catalytic activity">
    <reaction evidence="2">
        <text>an alpha-L-Fuc-(1-&gt;2)-beta-D-Gal-(1-&gt;4)-beta-D-GlcNAc derivative + GDP-beta-L-fucose = an alpha-L-Fuc-(1-&gt;2)-beta-D-Gal-(1-&gt;4)-[alpha-L-Fuc-(1-&gt;3)]-beta-D-GlcNAc derivative + GDP + H(+)</text>
        <dbReference type="Rhea" id="RHEA:77191"/>
        <dbReference type="ChEBI" id="CHEBI:15378"/>
        <dbReference type="ChEBI" id="CHEBI:57273"/>
        <dbReference type="ChEBI" id="CHEBI:58189"/>
        <dbReference type="ChEBI" id="CHEBI:133510"/>
        <dbReference type="ChEBI" id="CHEBI:195560"/>
    </reaction>
    <physiologicalReaction direction="left-to-right" evidence="2">
        <dbReference type="Rhea" id="RHEA:77192"/>
    </physiologicalReaction>
</comment>
<comment type="activity regulation">
    <text evidence="2">Activated by Mn2+.</text>
</comment>
<comment type="pathway">
    <text evidence="7">Protein modification; protein glycosylation.</text>
</comment>
<comment type="pathway">
    <text evidence="4 6">Glycolipid biosynthesis.</text>
</comment>
<comment type="subunit">
    <text evidence="2">Homodimer.</text>
</comment>
<comment type="subcellular location">
    <subcellularLocation>
        <location evidence="2">Golgi apparatus</location>
        <location evidence="2">trans-Golgi network membrane</location>
        <topology evidence="1">Single-pass type II membrane protein</topology>
    </subcellularLocation>
    <subcellularLocation>
        <location evidence="4">Golgi apparatus membrane</location>
    </subcellularLocation>
</comment>
<comment type="tissue specificity">
    <text evidence="8">Mainly detected in brain and kidney.</text>
</comment>
<comment type="developmental stage">
    <text evidence="4 5">Expressed in 1-cell embryos and then decreased dramatically in 2- and 4-cell embryos. It increases transiently in 8-cell embryos and then vanishes completely at the morula stage (PubMed:15121843). Predominantly expressed at all stages both in cerebrum and in cerebellum containing mesencephalon. Expression increases during the embryonic stage with the highest expression at P0 and decreases. Expression increases from the embryo to P7 stage, with the highest expression at P7, and decreases in adult brain. At P7 expressed in the neurons in layers II-IV and those in layers V and VI of the cerebral cortex. At P7 expressed in cerebellum, granule neurons in the internal granule cell layer (PubMed:12626397).</text>
</comment>
<comment type="domain">
    <text evidence="2">The donor-binding domain adopts a Rossman-like fold involved in GDP-beta-L-fucose sugar donor interactions.</text>
</comment>
<comment type="domain">
    <text evidence="2">The acceptor-binding domain adopts a Rossman-like fold consisting of six-stranded parallel beta sheets characteristic of the Toll/interleukin-1 receptor (TIR) fold family. Interacts with the LacNAc unit of type 2 LacNAc and H-type 2 LacNAc structures. It contains the catalytic base Glu-137 which deprotonates the hydroxyl group of GlcNAc while forming bridging interactions with the donor sugar to position the catalytic machinery in the active site.</text>
</comment>
<comment type="PTM">
    <text evidence="2">N-glycosylated with complex-type N-glycans.</text>
</comment>
<comment type="disruption phenotype">
    <text evidence="5 6">Homozygous Fut9 knockout mice develop normally, with no gross phenotypic abnormalities, and are fertile.</text>
</comment>
<comment type="similarity">
    <text evidence="11">Belongs to the glycosyltransferase 10 family.</text>
</comment>
<comment type="online information" name="Functional Glycomics Gateway - GTase">
    <link uri="http://www.functionalglycomics.org/glycomics/molecule/jsp/glycoEnzyme/viewGlycoEnzyme.jsp?gbpId=gt_mou_616"/>
    <text>Fucosyltransferase 9</text>
</comment>
<organism>
    <name type="scientific">Mus musculus</name>
    <name type="common">Mouse</name>
    <dbReference type="NCBI Taxonomy" id="10090"/>
    <lineage>
        <taxon>Eukaryota</taxon>
        <taxon>Metazoa</taxon>
        <taxon>Chordata</taxon>
        <taxon>Craniata</taxon>
        <taxon>Vertebrata</taxon>
        <taxon>Euteleostomi</taxon>
        <taxon>Mammalia</taxon>
        <taxon>Eutheria</taxon>
        <taxon>Euarchontoglires</taxon>
        <taxon>Glires</taxon>
        <taxon>Rodentia</taxon>
        <taxon>Myomorpha</taxon>
        <taxon>Muroidea</taxon>
        <taxon>Muridae</taxon>
        <taxon>Murinae</taxon>
        <taxon>Mus</taxon>
        <taxon>Mus</taxon>
    </lineage>
</organism>
<proteinExistence type="evidence at protein level"/>
<reference key="1">
    <citation type="journal article" date="1998" name="J. Biol. Chem.">
        <title>Expression cloning and characterization of a novel murine alpha1, 3-fucosyltransferase, mFuc-TIX, that synthesizes the Lewis x (CD15) epitope in brain and kidney.</title>
        <authorList>
            <person name="Kudo T."/>
            <person name="Ikehara Y."/>
            <person name="Togayachi A."/>
            <person name="Kaneko M."/>
            <person name="Hiraga T."/>
            <person name="Sasaki K."/>
            <person name="Narimatsu H."/>
        </authorList>
    </citation>
    <scope>NUCLEOTIDE SEQUENCE [MRNA]</scope>
    <scope>FUNCTION</scope>
    <scope>CATALYTIC ACTIVITY</scope>
    <scope>TISSUE SPECIFICITY</scope>
</reference>
<reference key="2">
    <citation type="journal article" date="2005" name="Science">
        <title>The transcriptional landscape of the mammalian genome.</title>
        <authorList>
            <person name="Carninci P."/>
            <person name="Kasukawa T."/>
            <person name="Katayama S."/>
            <person name="Gough J."/>
            <person name="Frith M.C."/>
            <person name="Maeda N."/>
            <person name="Oyama R."/>
            <person name="Ravasi T."/>
            <person name="Lenhard B."/>
            <person name="Wells C."/>
            <person name="Kodzius R."/>
            <person name="Shimokawa K."/>
            <person name="Bajic V.B."/>
            <person name="Brenner S.E."/>
            <person name="Batalov S."/>
            <person name="Forrest A.R."/>
            <person name="Zavolan M."/>
            <person name="Davis M.J."/>
            <person name="Wilming L.G."/>
            <person name="Aidinis V."/>
            <person name="Allen J.E."/>
            <person name="Ambesi-Impiombato A."/>
            <person name="Apweiler R."/>
            <person name="Aturaliya R.N."/>
            <person name="Bailey T.L."/>
            <person name="Bansal M."/>
            <person name="Baxter L."/>
            <person name="Beisel K.W."/>
            <person name="Bersano T."/>
            <person name="Bono H."/>
            <person name="Chalk A.M."/>
            <person name="Chiu K.P."/>
            <person name="Choudhary V."/>
            <person name="Christoffels A."/>
            <person name="Clutterbuck D.R."/>
            <person name="Crowe M.L."/>
            <person name="Dalla E."/>
            <person name="Dalrymple B.P."/>
            <person name="de Bono B."/>
            <person name="Della Gatta G."/>
            <person name="di Bernardo D."/>
            <person name="Down T."/>
            <person name="Engstrom P."/>
            <person name="Fagiolini M."/>
            <person name="Faulkner G."/>
            <person name="Fletcher C.F."/>
            <person name="Fukushima T."/>
            <person name="Furuno M."/>
            <person name="Futaki S."/>
            <person name="Gariboldi M."/>
            <person name="Georgii-Hemming P."/>
            <person name="Gingeras T.R."/>
            <person name="Gojobori T."/>
            <person name="Green R.E."/>
            <person name="Gustincich S."/>
            <person name="Harbers M."/>
            <person name="Hayashi Y."/>
            <person name="Hensch T.K."/>
            <person name="Hirokawa N."/>
            <person name="Hill D."/>
            <person name="Huminiecki L."/>
            <person name="Iacono M."/>
            <person name="Ikeo K."/>
            <person name="Iwama A."/>
            <person name="Ishikawa T."/>
            <person name="Jakt M."/>
            <person name="Kanapin A."/>
            <person name="Katoh M."/>
            <person name="Kawasawa Y."/>
            <person name="Kelso J."/>
            <person name="Kitamura H."/>
            <person name="Kitano H."/>
            <person name="Kollias G."/>
            <person name="Krishnan S.P."/>
            <person name="Kruger A."/>
            <person name="Kummerfeld S.K."/>
            <person name="Kurochkin I.V."/>
            <person name="Lareau L.F."/>
            <person name="Lazarevic D."/>
            <person name="Lipovich L."/>
            <person name="Liu J."/>
            <person name="Liuni S."/>
            <person name="McWilliam S."/>
            <person name="Madan Babu M."/>
            <person name="Madera M."/>
            <person name="Marchionni L."/>
            <person name="Matsuda H."/>
            <person name="Matsuzawa S."/>
            <person name="Miki H."/>
            <person name="Mignone F."/>
            <person name="Miyake S."/>
            <person name="Morris K."/>
            <person name="Mottagui-Tabar S."/>
            <person name="Mulder N."/>
            <person name="Nakano N."/>
            <person name="Nakauchi H."/>
            <person name="Ng P."/>
            <person name="Nilsson R."/>
            <person name="Nishiguchi S."/>
            <person name="Nishikawa S."/>
            <person name="Nori F."/>
            <person name="Ohara O."/>
            <person name="Okazaki Y."/>
            <person name="Orlando V."/>
            <person name="Pang K.C."/>
            <person name="Pavan W.J."/>
            <person name="Pavesi G."/>
            <person name="Pesole G."/>
            <person name="Petrovsky N."/>
            <person name="Piazza S."/>
            <person name="Reed J."/>
            <person name="Reid J.F."/>
            <person name="Ring B.Z."/>
            <person name="Ringwald M."/>
            <person name="Rost B."/>
            <person name="Ruan Y."/>
            <person name="Salzberg S.L."/>
            <person name="Sandelin A."/>
            <person name="Schneider C."/>
            <person name="Schoenbach C."/>
            <person name="Sekiguchi K."/>
            <person name="Semple C.A."/>
            <person name="Seno S."/>
            <person name="Sessa L."/>
            <person name="Sheng Y."/>
            <person name="Shibata Y."/>
            <person name="Shimada H."/>
            <person name="Shimada K."/>
            <person name="Silva D."/>
            <person name="Sinclair B."/>
            <person name="Sperling S."/>
            <person name="Stupka E."/>
            <person name="Sugiura K."/>
            <person name="Sultana R."/>
            <person name="Takenaka Y."/>
            <person name="Taki K."/>
            <person name="Tammoja K."/>
            <person name="Tan S.L."/>
            <person name="Tang S."/>
            <person name="Taylor M.S."/>
            <person name="Tegner J."/>
            <person name="Teichmann S.A."/>
            <person name="Ueda H.R."/>
            <person name="van Nimwegen E."/>
            <person name="Verardo R."/>
            <person name="Wei C.L."/>
            <person name="Yagi K."/>
            <person name="Yamanishi H."/>
            <person name="Zabarovsky E."/>
            <person name="Zhu S."/>
            <person name="Zimmer A."/>
            <person name="Hide W."/>
            <person name="Bult C."/>
            <person name="Grimmond S.M."/>
            <person name="Teasdale R.D."/>
            <person name="Liu E.T."/>
            <person name="Brusic V."/>
            <person name="Quackenbush J."/>
            <person name="Wahlestedt C."/>
            <person name="Mattick J.S."/>
            <person name="Hume D.A."/>
            <person name="Kai C."/>
            <person name="Sasaki D."/>
            <person name="Tomaru Y."/>
            <person name="Fukuda S."/>
            <person name="Kanamori-Katayama M."/>
            <person name="Suzuki M."/>
            <person name="Aoki J."/>
            <person name="Arakawa T."/>
            <person name="Iida J."/>
            <person name="Imamura K."/>
            <person name="Itoh M."/>
            <person name="Kato T."/>
            <person name="Kawaji H."/>
            <person name="Kawagashira N."/>
            <person name="Kawashima T."/>
            <person name="Kojima M."/>
            <person name="Kondo S."/>
            <person name="Konno H."/>
            <person name="Nakano K."/>
            <person name="Ninomiya N."/>
            <person name="Nishio T."/>
            <person name="Okada M."/>
            <person name="Plessy C."/>
            <person name="Shibata K."/>
            <person name="Shiraki T."/>
            <person name="Suzuki S."/>
            <person name="Tagami M."/>
            <person name="Waki K."/>
            <person name="Watahiki A."/>
            <person name="Okamura-Oho Y."/>
            <person name="Suzuki H."/>
            <person name="Kawai J."/>
            <person name="Hayashizaki Y."/>
        </authorList>
    </citation>
    <scope>NUCLEOTIDE SEQUENCE [LARGE SCALE MRNA]</scope>
    <source>
        <strain>C57BL/6J</strain>
        <tissue>Cerebellum</tissue>
        <tissue>Corpus striatum</tissue>
        <tissue>Olfactory bulb</tissue>
    </source>
</reference>
<reference key="3">
    <citation type="journal article" date="2003" name="Glycobiology">
        <title>Alpha1,3-fucosyltransferase IX (Fut9) determines Lewis X expression in brain.</title>
        <authorList>
            <person name="Nishihara S."/>
            <person name="Iwasaki H."/>
            <person name="Nakajima K."/>
            <person name="Togayachi A."/>
            <person name="Ikehara Y."/>
            <person name="Kudo T."/>
            <person name="Kushi Y."/>
            <person name="Furuya A."/>
            <person name="Shitara K."/>
            <person name="Narimatsu H."/>
        </authorList>
    </citation>
    <scope>FUNCTION</scope>
    <scope>CATALYTIC ACTIVITY</scope>
    <scope>PATHWAY</scope>
    <scope>SUBCELLULAR LOCATION</scope>
    <scope>DEVELOPMENTAL STAGE</scope>
</reference>
<reference key="4">
    <citation type="journal article" date="2004" name="Mol. Cell. Biol.">
        <title>Normal embryonic and germ cell development in mice lacking alpha 1,3-fucosyltransferase IX (Fut9) which show disappearance of stage-specific embryonic antigen 1.</title>
        <authorList>
            <person name="Kudo T."/>
            <person name="Kaneko M."/>
            <person name="Iwasaki H."/>
            <person name="Togayachi A."/>
            <person name="Nishihara S."/>
            <person name="Abe K."/>
            <person name="Narimatsu H."/>
        </authorList>
    </citation>
    <scope>DEVELOPMENTAL STAGE</scope>
    <scope>DISRUPTION PHENOTYPE</scope>
    <scope>FUNCTION</scope>
    <scope>CATALYTIC ACTIVITY</scope>
</reference>
<reference key="5">
    <citation type="journal article" date="2007" name="Glycobiology">
        <title>Mice lacking alpha1,3-fucosyltransferase IX demonstrate disappearance of Lewis x structure in brain and increased anxiety-like behaviors.</title>
        <authorList>
            <person name="Kudo T."/>
            <person name="Fujii T."/>
            <person name="Ikegami S."/>
            <person name="Inokuchi K."/>
            <person name="Takayama Y."/>
            <person name="Ikehara Y."/>
            <person name="Nishihara S."/>
            <person name="Togayachi A."/>
            <person name="Takahashi S."/>
            <person name="Tachibana K."/>
            <person name="Yuasa S."/>
            <person name="Narimatsu H."/>
        </authorList>
    </citation>
    <scope>FUNCTION</scope>
    <scope>CATALYTIC ACTIVITY</scope>
    <scope>PATHWAY</scope>
    <scope>DISRUPTION PHENOTYPE</scope>
</reference>
<reference key="6">
    <citation type="journal article" date="2012" name="J. Biol. Chem.">
        <title>Lewis X-carrying N-glycans regulate the proliferation of mouse embryonic neural stem cells via the Notch signaling pathway.</title>
        <authorList>
            <person name="Yagi H."/>
            <person name="Saito T."/>
            <person name="Yanagisawa M."/>
            <person name="Yu R.K."/>
            <person name="Kato K."/>
        </authorList>
    </citation>
    <scope>FUNCTION</scope>
    <scope>CATALYTIC ACTIVITY</scope>
    <scope>PATHWAY</scope>
</reference>
<sequence length="359" mass="42041">MTSTSKGILRPFLIVCIILGCFMACLLIYIKPTNSWVFSPMESASSVLKMKNFFSTKTDYFNETTILVWVWPFGQTFDLTSCQAMFNIQGCHLTTDRSLYNKSHAVLIHHRDISWDLTNLPQQARPPFQKWIWMNLESPTHTPQKSGIEHLFNLTLTYRRDSDIQVPYGFLTVSTNPFVFEVPSKEKLVCWVVSNWNPEHARVKYYNELSKSIEIHTYGQAFGEYVNDKNLIPTISTCKFYLSFENSIHKDYITEKLYNAFLAGSVPVVLGPSRENYENYIPADSFIHVEDFNSPSELAKYLKEVDKNNKLYLSYFNWRKDFTVNLPRFWESHACLACDHVKRHQEYKSVGNLEKWFWN</sequence>